<evidence type="ECO:0000255" key="1">
    <source>
        <dbReference type="HAMAP-Rule" id="MF_01317"/>
    </source>
</evidence>
<proteinExistence type="inferred from homology"/>
<feature type="chain" id="PRO_0000276217" description="Photosystem II reaction center protein L">
    <location>
        <begin position="1"/>
        <end position="38"/>
    </location>
</feature>
<feature type="transmembrane region" description="Helical" evidence="1">
    <location>
        <begin position="17"/>
        <end position="37"/>
    </location>
</feature>
<organism>
    <name type="scientific">Phalaenopsis aphrodite subsp. formosana</name>
    <name type="common">Moth orchid</name>
    <dbReference type="NCBI Taxonomy" id="308872"/>
    <lineage>
        <taxon>Eukaryota</taxon>
        <taxon>Viridiplantae</taxon>
        <taxon>Streptophyta</taxon>
        <taxon>Embryophyta</taxon>
        <taxon>Tracheophyta</taxon>
        <taxon>Spermatophyta</taxon>
        <taxon>Magnoliopsida</taxon>
        <taxon>Liliopsida</taxon>
        <taxon>Asparagales</taxon>
        <taxon>Orchidaceae</taxon>
        <taxon>Epidendroideae</taxon>
        <taxon>Vandeae</taxon>
        <taxon>Aeridinae</taxon>
        <taxon>Phalaenopsis</taxon>
    </lineage>
</organism>
<sequence length="38" mass="4497">MTQSNPNEQNVELNRTSLYWGLLLIFVLAVLFSNYFFN</sequence>
<name>PSBL_PHAAO</name>
<dbReference type="EMBL" id="AY916449">
    <property type="protein sequence ID" value="AAW82515.1"/>
    <property type="molecule type" value="Genomic_DNA"/>
</dbReference>
<dbReference type="RefSeq" id="YP_358593.1">
    <property type="nucleotide sequence ID" value="NC_007499.1"/>
</dbReference>
<dbReference type="SMR" id="Q3BAM5"/>
<dbReference type="GeneID" id="3741694"/>
<dbReference type="GO" id="GO:0009535">
    <property type="term" value="C:chloroplast thylakoid membrane"/>
    <property type="evidence" value="ECO:0007669"/>
    <property type="project" value="UniProtKB-SubCell"/>
</dbReference>
<dbReference type="GO" id="GO:0009539">
    <property type="term" value="C:photosystem II reaction center"/>
    <property type="evidence" value="ECO:0007669"/>
    <property type="project" value="InterPro"/>
</dbReference>
<dbReference type="GO" id="GO:0015979">
    <property type="term" value="P:photosynthesis"/>
    <property type="evidence" value="ECO:0007669"/>
    <property type="project" value="UniProtKB-UniRule"/>
</dbReference>
<dbReference type="HAMAP" id="MF_01317">
    <property type="entry name" value="PSII_PsbL"/>
    <property type="match status" value="1"/>
</dbReference>
<dbReference type="InterPro" id="IPR003372">
    <property type="entry name" value="PSII_PsbL"/>
</dbReference>
<dbReference type="InterPro" id="IPR037266">
    <property type="entry name" value="PSII_PsbL_sf"/>
</dbReference>
<dbReference type="NCBIfam" id="NF001972">
    <property type="entry name" value="PRK00753.1"/>
    <property type="match status" value="1"/>
</dbReference>
<dbReference type="Pfam" id="PF02419">
    <property type="entry name" value="PsbL"/>
    <property type="match status" value="1"/>
</dbReference>
<dbReference type="SUPFAM" id="SSF161017">
    <property type="entry name" value="Photosystem II reaction center protein L, PsbL"/>
    <property type="match status" value="1"/>
</dbReference>
<protein>
    <recommendedName>
        <fullName evidence="1">Photosystem II reaction center protein L</fullName>
        <shortName evidence="1">PSII-L</shortName>
    </recommendedName>
</protein>
<gene>
    <name evidence="1" type="primary">psbL</name>
</gene>
<geneLocation type="chloroplast"/>
<reference key="1">
    <citation type="journal article" date="2006" name="Mol. Biol. Evol.">
        <title>The chloroplast genome of Phalaenopsis aphrodite (Orchidaceae): comparative analysis of evolutionary rate with that of grasses and its phylogenetic implications.</title>
        <authorList>
            <person name="Chang C.-C."/>
            <person name="Lin H.-C."/>
            <person name="Lin I.-P."/>
            <person name="Chow T.-Y."/>
            <person name="Chen H.-H."/>
            <person name="Chen W.-H."/>
            <person name="Cheng C.-H."/>
            <person name="Lin C.-Y."/>
            <person name="Liu S.-M."/>
            <person name="Chang C.-C."/>
            <person name="Chaw S.-M."/>
        </authorList>
    </citation>
    <scope>NUCLEOTIDE SEQUENCE [LARGE SCALE GENOMIC DNA]</scope>
    <source>
        <strain>cv. Taisugar TS-97</strain>
    </source>
</reference>
<comment type="function">
    <text evidence="1">One of the components of the core complex of photosystem II (PSII). PSII is a light-driven water:plastoquinone oxidoreductase that uses light energy to abstract electrons from H(2)O, generating O(2) and a proton gradient subsequently used for ATP formation. It consists of a core antenna complex that captures photons, and an electron transfer chain that converts photonic excitation into a charge separation. This subunit is found at the monomer-monomer interface and is required for correct PSII assembly and/or dimerization.</text>
</comment>
<comment type="subunit">
    <text evidence="1">PSII is composed of 1 copy each of membrane proteins PsbA, PsbB, PsbC, PsbD, PsbE, PsbF, PsbH, PsbI, PsbJ, PsbK, PsbL, PsbM, PsbT, PsbX, PsbY, PsbZ, Psb30/Ycf12, at least 3 peripheral proteins of the oxygen-evolving complex and a large number of cofactors. It forms dimeric complexes.</text>
</comment>
<comment type="subcellular location">
    <subcellularLocation>
        <location evidence="1">Plastid</location>
        <location evidence="1">Chloroplast thylakoid membrane</location>
        <topology evidence="1">Single-pass membrane protein</topology>
    </subcellularLocation>
</comment>
<comment type="similarity">
    <text evidence="1">Belongs to the PsbL family.</text>
</comment>
<keyword id="KW-0150">Chloroplast</keyword>
<keyword id="KW-0472">Membrane</keyword>
<keyword id="KW-0602">Photosynthesis</keyword>
<keyword id="KW-0604">Photosystem II</keyword>
<keyword id="KW-0934">Plastid</keyword>
<keyword id="KW-0674">Reaction center</keyword>
<keyword id="KW-0793">Thylakoid</keyword>
<keyword id="KW-0812">Transmembrane</keyword>
<keyword id="KW-1133">Transmembrane helix</keyword>
<accession>Q3BAM5</accession>